<accession>P0DMD1</accession>
<proteinExistence type="evidence at protein level"/>
<comment type="function">
    <text evidence="1">Nerve growth factor is important for the development and maintenance of the sympathetic and sensory nervous systems. It stimulates division and differentiation of sympathetic and embryonic sensory neurons as well as basal forebrain cholinergic neurons in the brain. Its relevance in the snake venom is not clear. However, it has been shown to inhibit metalloproteinase-dependent proteolysis of platelet glycoprotein Ib alpha, suggesting a metalloproteinase inhibition to prevent metalloprotease autodigestion and/or protection against prey proteases (By similarity).</text>
</comment>
<comment type="subunit">
    <text evidence="1">Homodimer; non-covalently linked.</text>
</comment>
<comment type="subcellular location">
    <subcellularLocation>
        <location>Secreted</location>
    </subcellularLocation>
</comment>
<comment type="tissue specificity">
    <text>Expressed by the venom gland.</text>
</comment>
<comment type="miscellaneous">
    <text evidence="5">On reduced SDS-PAGE, the determined MW of this protein is 18.5 kDa.</text>
</comment>
<comment type="similarity">
    <text evidence="4">Belongs to the NGF-beta family.</text>
</comment>
<sequence length="168" mass="18478">MSMLCYTLIIAFLIGIWAAPKSEDNVSLGSPATPDISDTSCAKTHEALKTSQNTDQHSPAPKKAEDQEFGSAANIIVDPKLFQKRRFQSPRVLFSTQPPPLSRDEQSVEFLDNADSLNRNIRAKRGIHPVHNQGEFSVCDSVNVWVANKTTATDIKGNEVTVMVNVKP</sequence>
<protein>
    <recommendedName>
        <fullName>Venom nerve growth factor</fullName>
        <shortName>v-NGF</shortName>
        <shortName>vNGF</shortName>
    </recommendedName>
</protein>
<evidence type="ECO:0000250" key="1"/>
<evidence type="ECO:0000255" key="2"/>
<evidence type="ECO:0000256" key="3">
    <source>
        <dbReference type="SAM" id="MobiDB-lite"/>
    </source>
</evidence>
<evidence type="ECO:0000305" key="4"/>
<evidence type="ECO:0000305" key="5">
    <source>
    </source>
</evidence>
<name>NGFV_ECHOC</name>
<keyword id="KW-0165">Cleavage on pair of basic residues</keyword>
<keyword id="KW-1015">Disulfide bond</keyword>
<keyword id="KW-0325">Glycoprotein</keyword>
<keyword id="KW-0339">Growth factor</keyword>
<keyword id="KW-0481">Metalloenzyme inhibitor</keyword>
<keyword id="KW-0483">Metalloprotease inhibitor</keyword>
<keyword id="KW-0646">Protease inhibitor</keyword>
<keyword id="KW-0964">Secreted</keyword>
<keyword id="KW-0732">Signal</keyword>
<keyword id="KW-0800">Toxin</keyword>
<reference key="1">
    <citation type="journal article" date="2006" name="Gene">
        <title>Venom gland EST analysis of the saw-scaled viper, Echis ocellatus, reveals novel alpha9beta1 integrin-binding motifs in venom metalloproteinases and a new group of putative toxins, renin-like aspartic proteases.</title>
        <authorList>
            <person name="Wagstaff S.C."/>
            <person name="Harrison R.A."/>
        </authorList>
    </citation>
    <scope>NUCLEOTIDE SEQUENCE [MRNA]</scope>
    <source>
        <tissue>Venom gland</tissue>
    </source>
</reference>
<reference key="2">
    <citation type="journal article" date="2011" name="Toxicon">
        <title>Molecular diversity of snake venom nerve growth factors.</title>
        <authorList>
            <person name="Trummal K."/>
            <person name="Tonismagi K."/>
            <person name="Paalme V."/>
            <person name="Jarvekulg L."/>
            <person name="Siigur J."/>
            <person name="Siigur E."/>
        </authorList>
    </citation>
    <scope>CHARACTERIZATION</scope>
    <source>
        <tissue>Venom</tissue>
    </source>
</reference>
<feature type="signal peptide" evidence="2">
    <location>
        <begin position="1"/>
        <end position="18"/>
    </location>
</feature>
<feature type="propeptide" id="PRO_0000425458" evidence="1">
    <location>
        <begin position="19"/>
        <end position="123"/>
    </location>
</feature>
<feature type="chain" id="PRO_0000425459" description="Venom nerve growth factor">
    <location>
        <begin position="126"/>
        <end position="168"/>
    </location>
</feature>
<feature type="region of interest" description="Disordered" evidence="3">
    <location>
        <begin position="48"/>
        <end position="70"/>
    </location>
</feature>
<feature type="glycosylation site" description="N-linked (GlcNAc...) asparagine" evidence="2">
    <location>
        <position position="25"/>
    </location>
</feature>
<feature type="glycosylation site" description="N-linked (GlcNAc...) asparagine" evidence="2">
    <location>
        <position position="148"/>
    </location>
</feature>
<feature type="disulfide bond" evidence="1">
    <location>
        <begin position="139"/>
        <end status="unknown"/>
    </location>
</feature>
<feature type="non-terminal residue">
    <location>
        <position position="168"/>
    </location>
</feature>
<organism>
    <name type="scientific">Echis ocellatus</name>
    <name type="common">Ocellated saw-scaled viper</name>
    <dbReference type="NCBI Taxonomy" id="99586"/>
    <lineage>
        <taxon>Eukaryota</taxon>
        <taxon>Metazoa</taxon>
        <taxon>Chordata</taxon>
        <taxon>Craniata</taxon>
        <taxon>Vertebrata</taxon>
        <taxon>Euteleostomi</taxon>
        <taxon>Lepidosauria</taxon>
        <taxon>Squamata</taxon>
        <taxon>Bifurcata</taxon>
        <taxon>Unidentata</taxon>
        <taxon>Episquamata</taxon>
        <taxon>Toxicofera</taxon>
        <taxon>Serpentes</taxon>
        <taxon>Colubroidea</taxon>
        <taxon>Viperidae</taxon>
        <taxon>Viperinae</taxon>
        <taxon>Echis</taxon>
    </lineage>
</organism>
<dbReference type="EMBL" id="DW361587">
    <property type="status" value="NOT_ANNOTATED_CDS"/>
    <property type="molecule type" value="mRNA"/>
</dbReference>
<dbReference type="SMR" id="P0DMD1"/>
<dbReference type="GO" id="GO:0030424">
    <property type="term" value="C:axon"/>
    <property type="evidence" value="ECO:0007669"/>
    <property type="project" value="TreeGrafter"/>
</dbReference>
<dbReference type="GO" id="GO:0030425">
    <property type="term" value="C:dendrite"/>
    <property type="evidence" value="ECO:0007669"/>
    <property type="project" value="TreeGrafter"/>
</dbReference>
<dbReference type="GO" id="GO:0005615">
    <property type="term" value="C:extracellular space"/>
    <property type="evidence" value="ECO:0007669"/>
    <property type="project" value="TreeGrafter"/>
</dbReference>
<dbReference type="GO" id="GO:0008021">
    <property type="term" value="C:synaptic vesicle"/>
    <property type="evidence" value="ECO:0007669"/>
    <property type="project" value="TreeGrafter"/>
</dbReference>
<dbReference type="GO" id="GO:0008083">
    <property type="term" value="F:growth factor activity"/>
    <property type="evidence" value="ECO:0007669"/>
    <property type="project" value="UniProtKB-KW"/>
</dbReference>
<dbReference type="GO" id="GO:0005163">
    <property type="term" value="F:nerve growth factor receptor binding"/>
    <property type="evidence" value="ECO:0007669"/>
    <property type="project" value="TreeGrafter"/>
</dbReference>
<dbReference type="GO" id="GO:0030414">
    <property type="term" value="F:peptidase inhibitor activity"/>
    <property type="evidence" value="ECO:0007669"/>
    <property type="project" value="UniProtKB-KW"/>
</dbReference>
<dbReference type="GO" id="GO:0090729">
    <property type="term" value="F:toxin activity"/>
    <property type="evidence" value="ECO:0007669"/>
    <property type="project" value="UniProtKB-KW"/>
</dbReference>
<dbReference type="GO" id="GO:0007169">
    <property type="term" value="P:cell surface receptor protein tyrosine kinase signaling pathway"/>
    <property type="evidence" value="ECO:0007669"/>
    <property type="project" value="TreeGrafter"/>
</dbReference>
<dbReference type="GO" id="GO:0050804">
    <property type="term" value="P:modulation of chemical synaptic transmission"/>
    <property type="evidence" value="ECO:0007669"/>
    <property type="project" value="TreeGrafter"/>
</dbReference>
<dbReference type="GO" id="GO:0043524">
    <property type="term" value="P:negative regulation of neuron apoptotic process"/>
    <property type="evidence" value="ECO:0007669"/>
    <property type="project" value="TreeGrafter"/>
</dbReference>
<dbReference type="GO" id="GO:0021675">
    <property type="term" value="P:nerve development"/>
    <property type="evidence" value="ECO:0007669"/>
    <property type="project" value="TreeGrafter"/>
</dbReference>
<dbReference type="GO" id="GO:0038180">
    <property type="term" value="P:nerve growth factor signaling pathway"/>
    <property type="evidence" value="ECO:0007669"/>
    <property type="project" value="TreeGrafter"/>
</dbReference>
<dbReference type="GO" id="GO:0048812">
    <property type="term" value="P:neuron projection morphogenesis"/>
    <property type="evidence" value="ECO:0007669"/>
    <property type="project" value="TreeGrafter"/>
</dbReference>
<dbReference type="Gene3D" id="2.10.90.10">
    <property type="entry name" value="Cystine-knot cytokines"/>
    <property type="match status" value="1"/>
</dbReference>
<dbReference type="InterPro" id="IPR029034">
    <property type="entry name" value="Cystine-knot_cytokine"/>
</dbReference>
<dbReference type="InterPro" id="IPR020408">
    <property type="entry name" value="Nerve_growth_factor-like"/>
</dbReference>
<dbReference type="InterPro" id="IPR002072">
    <property type="entry name" value="Nerve_growth_factor-rel"/>
</dbReference>
<dbReference type="InterPro" id="IPR020433">
    <property type="entry name" value="Venom_nerve_growth_factor"/>
</dbReference>
<dbReference type="PANTHER" id="PTHR11589:SF10">
    <property type="entry name" value="BETA-NERVE GROWTH FACTOR"/>
    <property type="match status" value="1"/>
</dbReference>
<dbReference type="PANTHER" id="PTHR11589">
    <property type="entry name" value="NERVE GROWTH FACTOR NGF -RELATED"/>
    <property type="match status" value="1"/>
</dbReference>
<dbReference type="Pfam" id="PF00243">
    <property type="entry name" value="NGF"/>
    <property type="match status" value="1"/>
</dbReference>
<dbReference type="PIRSF" id="PIRSF001789">
    <property type="entry name" value="NGF"/>
    <property type="match status" value="1"/>
</dbReference>
<dbReference type="PRINTS" id="PR01917">
    <property type="entry name" value="VENOMNGF"/>
</dbReference>
<dbReference type="SMART" id="SM00140">
    <property type="entry name" value="NGF"/>
    <property type="match status" value="1"/>
</dbReference>
<dbReference type="SUPFAM" id="SSF57501">
    <property type="entry name" value="Cystine-knot cytokines"/>
    <property type="match status" value="1"/>
</dbReference>
<dbReference type="PROSITE" id="PS50270">
    <property type="entry name" value="NGF_2"/>
    <property type="match status" value="1"/>
</dbReference>